<dbReference type="EMBL" id="CP000675">
    <property type="protein sequence ID" value="ABQ56898.1"/>
    <property type="molecule type" value="Genomic_DNA"/>
</dbReference>
<dbReference type="RefSeq" id="WP_010946094.1">
    <property type="nucleotide sequence ID" value="NZ_JAPMSS010000006.1"/>
</dbReference>
<dbReference type="SMR" id="A5IHP8"/>
<dbReference type="GeneID" id="57034348"/>
<dbReference type="KEGG" id="lpc:LPC_2997"/>
<dbReference type="HOGENOM" id="CLU_098841_0_1_6"/>
<dbReference type="GO" id="GO:0022625">
    <property type="term" value="C:cytosolic large ribosomal subunit"/>
    <property type="evidence" value="ECO:0007669"/>
    <property type="project" value="TreeGrafter"/>
</dbReference>
<dbReference type="GO" id="GO:0008097">
    <property type="term" value="F:5S rRNA binding"/>
    <property type="evidence" value="ECO:0007669"/>
    <property type="project" value="TreeGrafter"/>
</dbReference>
<dbReference type="GO" id="GO:0003735">
    <property type="term" value="F:structural constituent of ribosome"/>
    <property type="evidence" value="ECO:0007669"/>
    <property type="project" value="InterPro"/>
</dbReference>
<dbReference type="GO" id="GO:0006412">
    <property type="term" value="P:translation"/>
    <property type="evidence" value="ECO:0007669"/>
    <property type="project" value="UniProtKB-UniRule"/>
</dbReference>
<dbReference type="CDD" id="cd00432">
    <property type="entry name" value="Ribosomal_L18_L5e"/>
    <property type="match status" value="1"/>
</dbReference>
<dbReference type="FunFam" id="3.30.420.100:FF:000001">
    <property type="entry name" value="50S ribosomal protein L18"/>
    <property type="match status" value="1"/>
</dbReference>
<dbReference type="Gene3D" id="3.30.420.100">
    <property type="match status" value="1"/>
</dbReference>
<dbReference type="HAMAP" id="MF_01337_B">
    <property type="entry name" value="Ribosomal_uL18_B"/>
    <property type="match status" value="1"/>
</dbReference>
<dbReference type="InterPro" id="IPR004389">
    <property type="entry name" value="Ribosomal_uL18_bac-type"/>
</dbReference>
<dbReference type="InterPro" id="IPR005484">
    <property type="entry name" value="Ribosomal_uL18_bac/euk"/>
</dbReference>
<dbReference type="NCBIfam" id="TIGR00060">
    <property type="entry name" value="L18_bact"/>
    <property type="match status" value="1"/>
</dbReference>
<dbReference type="PANTHER" id="PTHR12899">
    <property type="entry name" value="39S RIBOSOMAL PROTEIN L18, MITOCHONDRIAL"/>
    <property type="match status" value="1"/>
</dbReference>
<dbReference type="PANTHER" id="PTHR12899:SF3">
    <property type="entry name" value="LARGE RIBOSOMAL SUBUNIT PROTEIN UL18M"/>
    <property type="match status" value="1"/>
</dbReference>
<dbReference type="Pfam" id="PF00861">
    <property type="entry name" value="Ribosomal_L18p"/>
    <property type="match status" value="1"/>
</dbReference>
<dbReference type="SUPFAM" id="SSF53137">
    <property type="entry name" value="Translational machinery components"/>
    <property type="match status" value="1"/>
</dbReference>
<name>RL18_LEGPC</name>
<sequence length="119" mass="13007">MNKQNARHRRGLKAKALIRKTGRSRLVVYRSGVHIYSQIVKSDQLGDKVLVASSTIDKELRSSLTGKSKVEQASLVGQLLGKRAKAAGITQVAFDRAGYKYHGRVKALAEGAREAGLDF</sequence>
<gene>
    <name evidence="1" type="primary">rplR</name>
    <name type="ordered locus">LPC_2997</name>
</gene>
<comment type="function">
    <text evidence="1">This is one of the proteins that bind and probably mediate the attachment of the 5S RNA into the large ribosomal subunit, where it forms part of the central protuberance.</text>
</comment>
<comment type="subunit">
    <text evidence="1">Part of the 50S ribosomal subunit; part of the 5S rRNA/L5/L18/L25 subcomplex. Contacts the 5S and 23S rRNAs.</text>
</comment>
<comment type="similarity">
    <text evidence="1">Belongs to the universal ribosomal protein uL18 family.</text>
</comment>
<protein>
    <recommendedName>
        <fullName evidence="1">Large ribosomal subunit protein uL18</fullName>
    </recommendedName>
    <alternativeName>
        <fullName evidence="2">50S ribosomal protein L18</fullName>
    </alternativeName>
</protein>
<keyword id="KW-0687">Ribonucleoprotein</keyword>
<keyword id="KW-0689">Ribosomal protein</keyword>
<keyword id="KW-0694">RNA-binding</keyword>
<keyword id="KW-0699">rRNA-binding</keyword>
<feature type="chain" id="PRO_1000053048" description="Large ribosomal subunit protein uL18">
    <location>
        <begin position="1"/>
        <end position="119"/>
    </location>
</feature>
<evidence type="ECO:0000255" key="1">
    <source>
        <dbReference type="HAMAP-Rule" id="MF_01337"/>
    </source>
</evidence>
<evidence type="ECO:0000305" key="2"/>
<accession>A5IHP8</accession>
<organism>
    <name type="scientific">Legionella pneumophila (strain Corby)</name>
    <dbReference type="NCBI Taxonomy" id="400673"/>
    <lineage>
        <taxon>Bacteria</taxon>
        <taxon>Pseudomonadati</taxon>
        <taxon>Pseudomonadota</taxon>
        <taxon>Gammaproteobacteria</taxon>
        <taxon>Legionellales</taxon>
        <taxon>Legionellaceae</taxon>
        <taxon>Legionella</taxon>
    </lineage>
</organism>
<proteinExistence type="inferred from homology"/>
<reference key="1">
    <citation type="submission" date="2006-11" db="EMBL/GenBank/DDBJ databases">
        <title>Identification and characterization of a new conjugation/ type IVA secretion system (trb/tra) of L. pneumophila Corby localized on a mobile genomic island.</title>
        <authorList>
            <person name="Gloeckner G."/>
            <person name="Albert-Weissenberger C."/>
            <person name="Weinmann E."/>
            <person name="Jacobi S."/>
            <person name="Schunder E."/>
            <person name="Steinert M."/>
            <person name="Buchrieser C."/>
            <person name="Hacker J."/>
            <person name="Heuner K."/>
        </authorList>
    </citation>
    <scope>NUCLEOTIDE SEQUENCE [LARGE SCALE GENOMIC DNA]</scope>
    <source>
        <strain>Corby</strain>
    </source>
</reference>